<feature type="chain" id="PRO_0000229104" description="2,3-bisphosphoglycerate-dependent phosphoglycerate mutase">
    <location>
        <begin position="1"/>
        <end position="248"/>
    </location>
</feature>
<feature type="active site" description="Tele-phosphohistidine intermediate" evidence="1">
    <location>
        <position position="9"/>
    </location>
</feature>
<feature type="active site" description="Proton donor/acceptor" evidence="1">
    <location>
        <position position="87"/>
    </location>
</feature>
<feature type="binding site" evidence="1">
    <location>
        <begin position="8"/>
        <end position="15"/>
    </location>
    <ligand>
        <name>substrate</name>
    </ligand>
</feature>
<feature type="binding site" evidence="1">
    <location>
        <begin position="21"/>
        <end position="22"/>
    </location>
    <ligand>
        <name>substrate</name>
    </ligand>
</feature>
<feature type="binding site" evidence="1">
    <location>
        <position position="60"/>
    </location>
    <ligand>
        <name>substrate</name>
    </ligand>
</feature>
<feature type="binding site" evidence="1">
    <location>
        <begin position="87"/>
        <end position="90"/>
    </location>
    <ligand>
        <name>substrate</name>
    </ligand>
</feature>
<feature type="binding site" evidence="1">
    <location>
        <position position="98"/>
    </location>
    <ligand>
        <name>substrate</name>
    </ligand>
</feature>
<feature type="binding site" evidence="1">
    <location>
        <begin position="114"/>
        <end position="115"/>
    </location>
    <ligand>
        <name>substrate</name>
    </ligand>
</feature>
<feature type="binding site" evidence="1">
    <location>
        <begin position="183"/>
        <end position="184"/>
    </location>
    <ligand>
        <name>substrate</name>
    </ligand>
</feature>
<feature type="site" description="Transition state stabilizer" evidence="1">
    <location>
        <position position="182"/>
    </location>
</feature>
<accession>Q64R85</accession>
<gene>
    <name evidence="1" type="primary">gpmA</name>
    <name type="ordered locus">BF3252</name>
</gene>
<keyword id="KW-0312">Gluconeogenesis</keyword>
<keyword id="KW-0324">Glycolysis</keyword>
<keyword id="KW-0413">Isomerase</keyword>
<evidence type="ECO:0000255" key="1">
    <source>
        <dbReference type="HAMAP-Rule" id="MF_01039"/>
    </source>
</evidence>
<protein>
    <recommendedName>
        <fullName evidence="1">2,3-bisphosphoglycerate-dependent phosphoglycerate mutase</fullName>
        <shortName evidence="1">BPG-dependent PGAM</shortName>
        <shortName evidence="1">PGAM</shortName>
        <shortName evidence="1">Phosphoglyceromutase</shortName>
        <shortName evidence="1">dPGM</shortName>
        <ecNumber evidence="1">5.4.2.11</ecNumber>
    </recommendedName>
</protein>
<organism>
    <name type="scientific">Bacteroides fragilis (strain YCH46)</name>
    <dbReference type="NCBI Taxonomy" id="295405"/>
    <lineage>
        <taxon>Bacteria</taxon>
        <taxon>Pseudomonadati</taxon>
        <taxon>Bacteroidota</taxon>
        <taxon>Bacteroidia</taxon>
        <taxon>Bacteroidales</taxon>
        <taxon>Bacteroidaceae</taxon>
        <taxon>Bacteroides</taxon>
    </lineage>
</organism>
<sequence>MKKIVLLRHGESAWNKENRFTGWTDVDLTEKGIAEACKAGELLKENGFNFDKAYTSYLKRAVKTLNCVLDRMDQDWIPVEKSWRLNEKHYGDLQGLNKSETAAKYGDEQVLIWRRSYDIAPNALSEDDPRNPRFENRYQEVPDAELPRTESLKDTIERIMPYWKCIIFPNLKTADEILVVAHGNSLRGIIKHLKHISDEEIVKLNLPTAVPYVFEFSDELNLEKDYFLGDPEEIRKLMEAVANQGKKK</sequence>
<reference key="1">
    <citation type="journal article" date="2004" name="Proc. Natl. Acad. Sci. U.S.A.">
        <title>Genomic analysis of Bacteroides fragilis reveals extensive DNA inversions regulating cell surface adaptation.</title>
        <authorList>
            <person name="Kuwahara T."/>
            <person name="Yamashita A."/>
            <person name="Hirakawa H."/>
            <person name="Nakayama H."/>
            <person name="Toh H."/>
            <person name="Okada N."/>
            <person name="Kuhara S."/>
            <person name="Hattori M."/>
            <person name="Hayashi T."/>
            <person name="Ohnishi Y."/>
        </authorList>
    </citation>
    <scope>NUCLEOTIDE SEQUENCE [LARGE SCALE GENOMIC DNA]</scope>
    <source>
        <strain>YCH46</strain>
    </source>
</reference>
<name>GPMA_BACFR</name>
<comment type="function">
    <text evidence="1">Catalyzes the interconversion of 2-phosphoglycerate and 3-phosphoglycerate.</text>
</comment>
<comment type="catalytic activity">
    <reaction evidence="1">
        <text>(2R)-2-phosphoglycerate = (2R)-3-phosphoglycerate</text>
        <dbReference type="Rhea" id="RHEA:15901"/>
        <dbReference type="ChEBI" id="CHEBI:58272"/>
        <dbReference type="ChEBI" id="CHEBI:58289"/>
        <dbReference type="EC" id="5.4.2.11"/>
    </reaction>
</comment>
<comment type="pathway">
    <text evidence="1">Carbohydrate degradation; glycolysis; pyruvate from D-glyceraldehyde 3-phosphate: step 3/5.</text>
</comment>
<comment type="similarity">
    <text evidence="1">Belongs to the phosphoglycerate mutase family. BPG-dependent PGAM subfamily.</text>
</comment>
<dbReference type="EC" id="5.4.2.11" evidence="1"/>
<dbReference type="EMBL" id="AP006841">
    <property type="protein sequence ID" value="BAD49996.1"/>
    <property type="molecule type" value="Genomic_DNA"/>
</dbReference>
<dbReference type="RefSeq" id="WP_005789269.1">
    <property type="nucleotide sequence ID" value="NZ_UYXF01000011.1"/>
</dbReference>
<dbReference type="RefSeq" id="YP_100530.1">
    <property type="nucleotide sequence ID" value="NC_006347.1"/>
</dbReference>
<dbReference type="SMR" id="Q64R85"/>
<dbReference type="STRING" id="295405.BF3252"/>
<dbReference type="GeneID" id="60367104"/>
<dbReference type="KEGG" id="bfr:BF3252"/>
<dbReference type="PATRIC" id="fig|295405.11.peg.3123"/>
<dbReference type="HOGENOM" id="CLU_033323_1_1_10"/>
<dbReference type="OrthoDB" id="9782128at2"/>
<dbReference type="UniPathway" id="UPA00109">
    <property type="reaction ID" value="UER00186"/>
</dbReference>
<dbReference type="Proteomes" id="UP000002197">
    <property type="component" value="Chromosome"/>
</dbReference>
<dbReference type="GO" id="GO:0004619">
    <property type="term" value="F:phosphoglycerate mutase activity"/>
    <property type="evidence" value="ECO:0007669"/>
    <property type="project" value="UniProtKB-EC"/>
</dbReference>
<dbReference type="GO" id="GO:0006094">
    <property type="term" value="P:gluconeogenesis"/>
    <property type="evidence" value="ECO:0007669"/>
    <property type="project" value="UniProtKB-UniRule"/>
</dbReference>
<dbReference type="GO" id="GO:0006096">
    <property type="term" value="P:glycolytic process"/>
    <property type="evidence" value="ECO:0007669"/>
    <property type="project" value="UniProtKB-UniRule"/>
</dbReference>
<dbReference type="CDD" id="cd07067">
    <property type="entry name" value="HP_PGM_like"/>
    <property type="match status" value="1"/>
</dbReference>
<dbReference type="FunFam" id="3.40.50.1240:FF:000003">
    <property type="entry name" value="2,3-bisphosphoglycerate-dependent phosphoglycerate mutase"/>
    <property type="match status" value="1"/>
</dbReference>
<dbReference type="Gene3D" id="3.40.50.1240">
    <property type="entry name" value="Phosphoglycerate mutase-like"/>
    <property type="match status" value="1"/>
</dbReference>
<dbReference type="HAMAP" id="MF_01039">
    <property type="entry name" value="PGAM_GpmA"/>
    <property type="match status" value="1"/>
</dbReference>
<dbReference type="InterPro" id="IPR013078">
    <property type="entry name" value="His_Pase_superF_clade-1"/>
</dbReference>
<dbReference type="InterPro" id="IPR029033">
    <property type="entry name" value="His_PPase_superfam"/>
</dbReference>
<dbReference type="InterPro" id="IPR001345">
    <property type="entry name" value="PG/BPGM_mutase_AS"/>
</dbReference>
<dbReference type="InterPro" id="IPR005952">
    <property type="entry name" value="Phosphogly_mut1"/>
</dbReference>
<dbReference type="NCBIfam" id="TIGR01258">
    <property type="entry name" value="pgm_1"/>
    <property type="match status" value="1"/>
</dbReference>
<dbReference type="NCBIfam" id="NF010713">
    <property type="entry name" value="PRK14115.1"/>
    <property type="match status" value="1"/>
</dbReference>
<dbReference type="PANTHER" id="PTHR11931">
    <property type="entry name" value="PHOSPHOGLYCERATE MUTASE"/>
    <property type="match status" value="1"/>
</dbReference>
<dbReference type="Pfam" id="PF00300">
    <property type="entry name" value="His_Phos_1"/>
    <property type="match status" value="2"/>
</dbReference>
<dbReference type="PIRSF" id="PIRSF000709">
    <property type="entry name" value="6PFK_2-Ptase"/>
    <property type="match status" value="1"/>
</dbReference>
<dbReference type="SMART" id="SM00855">
    <property type="entry name" value="PGAM"/>
    <property type="match status" value="1"/>
</dbReference>
<dbReference type="SUPFAM" id="SSF53254">
    <property type="entry name" value="Phosphoglycerate mutase-like"/>
    <property type="match status" value="1"/>
</dbReference>
<dbReference type="PROSITE" id="PS00175">
    <property type="entry name" value="PG_MUTASE"/>
    <property type="match status" value="1"/>
</dbReference>
<proteinExistence type="inferred from homology"/>